<proteinExistence type="inferred from homology"/>
<dbReference type="EC" id="2.3.2.29" evidence="1"/>
<dbReference type="EMBL" id="AM902716">
    <property type="protein sequence ID" value="CAP41264.1"/>
    <property type="molecule type" value="Genomic_DNA"/>
</dbReference>
<dbReference type="SMR" id="A9I8M3"/>
<dbReference type="STRING" id="94624.Bpet0932"/>
<dbReference type="KEGG" id="bpt:Bpet0932"/>
<dbReference type="eggNOG" id="COG2935">
    <property type="taxonomic scope" value="Bacteria"/>
</dbReference>
<dbReference type="Proteomes" id="UP000001225">
    <property type="component" value="Chromosome"/>
</dbReference>
<dbReference type="GO" id="GO:0005737">
    <property type="term" value="C:cytoplasm"/>
    <property type="evidence" value="ECO:0007669"/>
    <property type="project" value="UniProtKB-SubCell"/>
</dbReference>
<dbReference type="GO" id="GO:0004057">
    <property type="term" value="F:arginyl-tRNA--protein transferase activity"/>
    <property type="evidence" value="ECO:0007669"/>
    <property type="project" value="InterPro"/>
</dbReference>
<dbReference type="GO" id="GO:0008914">
    <property type="term" value="F:leucyl-tRNA--protein transferase activity"/>
    <property type="evidence" value="ECO:0007669"/>
    <property type="project" value="UniProtKB-UniRule"/>
</dbReference>
<dbReference type="GO" id="GO:0071596">
    <property type="term" value="P:ubiquitin-dependent protein catabolic process via the N-end rule pathway"/>
    <property type="evidence" value="ECO:0007669"/>
    <property type="project" value="InterPro"/>
</dbReference>
<dbReference type="HAMAP" id="MF_00689">
    <property type="entry name" value="Bpt"/>
    <property type="match status" value="1"/>
</dbReference>
<dbReference type="InterPro" id="IPR016181">
    <property type="entry name" value="Acyl_CoA_acyltransferase"/>
</dbReference>
<dbReference type="InterPro" id="IPR017138">
    <property type="entry name" value="Asp_Glu_LeuTrfase"/>
</dbReference>
<dbReference type="InterPro" id="IPR030700">
    <property type="entry name" value="N-end_Aminoacyl_Trfase"/>
</dbReference>
<dbReference type="InterPro" id="IPR007472">
    <property type="entry name" value="N-end_Aminoacyl_Trfase_C"/>
</dbReference>
<dbReference type="InterPro" id="IPR007471">
    <property type="entry name" value="N-end_Aminoacyl_Trfase_N"/>
</dbReference>
<dbReference type="NCBIfam" id="NF002341">
    <property type="entry name" value="PRK01305.1-1"/>
    <property type="match status" value="1"/>
</dbReference>
<dbReference type="NCBIfam" id="NF002342">
    <property type="entry name" value="PRK01305.1-3"/>
    <property type="match status" value="1"/>
</dbReference>
<dbReference type="NCBIfam" id="NF002346">
    <property type="entry name" value="PRK01305.2-3"/>
    <property type="match status" value="1"/>
</dbReference>
<dbReference type="PANTHER" id="PTHR21367">
    <property type="entry name" value="ARGININE-TRNA-PROTEIN TRANSFERASE 1"/>
    <property type="match status" value="1"/>
</dbReference>
<dbReference type="PANTHER" id="PTHR21367:SF1">
    <property type="entry name" value="ARGINYL-TRNA--PROTEIN TRANSFERASE 1"/>
    <property type="match status" value="1"/>
</dbReference>
<dbReference type="Pfam" id="PF04377">
    <property type="entry name" value="ATE_C"/>
    <property type="match status" value="1"/>
</dbReference>
<dbReference type="Pfam" id="PF04376">
    <property type="entry name" value="ATE_N"/>
    <property type="match status" value="1"/>
</dbReference>
<dbReference type="PIRSF" id="PIRSF037208">
    <property type="entry name" value="ATE_pro_prd"/>
    <property type="match status" value="1"/>
</dbReference>
<dbReference type="SUPFAM" id="SSF55729">
    <property type="entry name" value="Acyl-CoA N-acyltransferases (Nat)"/>
    <property type="match status" value="1"/>
</dbReference>
<keyword id="KW-0012">Acyltransferase</keyword>
<keyword id="KW-0963">Cytoplasm</keyword>
<keyword id="KW-0808">Transferase</keyword>
<gene>
    <name evidence="1" type="primary">bpt</name>
    <name type="ordered locus">Bpet0932</name>
</gene>
<name>BPT_BORPD</name>
<sequence>MSQLKELPFATLQFYSTAPYPCSYLPGQQARSQVAAPGHLINAGAYSQLVEQGFRRSGLFTYRPHCDNCRACVPVRVDTARFAPNRSQRRAWRGHQGLRAFVAELAWSPEHYDLYTRYQQGRHPGGGMDDDSRTQYAQFLLTSRVNTRLVEFRDAEGTLAMVSIIDVLDDGLSSVYTFYDPAARGSLGTYNVLWQIEQCRTLDLPWLYLGYWIRDSRKMAYKSGFKPLQLYLDGAWQAPPPGTL</sequence>
<feature type="chain" id="PRO_1000131970" description="Aspartate/glutamate leucyltransferase">
    <location>
        <begin position="1"/>
        <end position="244"/>
    </location>
</feature>
<accession>A9I8M3</accession>
<comment type="function">
    <text evidence="1">Functions in the N-end rule pathway of protein degradation where it conjugates Leu from its aminoacyl-tRNA to the N-termini of proteins containing an N-terminal aspartate or glutamate.</text>
</comment>
<comment type="catalytic activity">
    <reaction evidence="1">
        <text>N-terminal L-glutamyl-[protein] + L-leucyl-tRNA(Leu) = N-terminal L-leucyl-L-glutamyl-[protein] + tRNA(Leu) + H(+)</text>
        <dbReference type="Rhea" id="RHEA:50412"/>
        <dbReference type="Rhea" id="RHEA-COMP:9613"/>
        <dbReference type="Rhea" id="RHEA-COMP:9622"/>
        <dbReference type="Rhea" id="RHEA-COMP:12664"/>
        <dbReference type="Rhea" id="RHEA-COMP:12668"/>
        <dbReference type="ChEBI" id="CHEBI:15378"/>
        <dbReference type="ChEBI" id="CHEBI:64721"/>
        <dbReference type="ChEBI" id="CHEBI:78442"/>
        <dbReference type="ChEBI" id="CHEBI:78494"/>
        <dbReference type="ChEBI" id="CHEBI:133041"/>
        <dbReference type="EC" id="2.3.2.29"/>
    </reaction>
</comment>
<comment type="catalytic activity">
    <reaction evidence="1">
        <text>N-terminal L-aspartyl-[protein] + L-leucyl-tRNA(Leu) = N-terminal L-leucyl-L-aspartyl-[protein] + tRNA(Leu) + H(+)</text>
        <dbReference type="Rhea" id="RHEA:50420"/>
        <dbReference type="Rhea" id="RHEA-COMP:9613"/>
        <dbReference type="Rhea" id="RHEA-COMP:9622"/>
        <dbReference type="Rhea" id="RHEA-COMP:12669"/>
        <dbReference type="Rhea" id="RHEA-COMP:12674"/>
        <dbReference type="ChEBI" id="CHEBI:15378"/>
        <dbReference type="ChEBI" id="CHEBI:64720"/>
        <dbReference type="ChEBI" id="CHEBI:78442"/>
        <dbReference type="ChEBI" id="CHEBI:78494"/>
        <dbReference type="ChEBI" id="CHEBI:133042"/>
        <dbReference type="EC" id="2.3.2.29"/>
    </reaction>
</comment>
<comment type="subcellular location">
    <subcellularLocation>
        <location evidence="1">Cytoplasm</location>
    </subcellularLocation>
</comment>
<comment type="similarity">
    <text evidence="1">Belongs to the R-transferase family. Bpt subfamily.</text>
</comment>
<reference key="1">
    <citation type="journal article" date="2008" name="BMC Genomics">
        <title>The missing link: Bordetella petrii is endowed with both the metabolic versatility of environmental bacteria and virulence traits of pathogenic Bordetellae.</title>
        <authorList>
            <person name="Gross R."/>
            <person name="Guzman C.A."/>
            <person name="Sebaihia M."/>
            <person name="Martin dos Santos V.A.P."/>
            <person name="Pieper D.H."/>
            <person name="Koebnik R."/>
            <person name="Lechner M."/>
            <person name="Bartels D."/>
            <person name="Buhrmester J."/>
            <person name="Choudhuri J.V."/>
            <person name="Ebensen T."/>
            <person name="Gaigalat L."/>
            <person name="Herrmann S."/>
            <person name="Khachane A.N."/>
            <person name="Larisch C."/>
            <person name="Link S."/>
            <person name="Linke B."/>
            <person name="Meyer F."/>
            <person name="Mormann S."/>
            <person name="Nakunst D."/>
            <person name="Rueckert C."/>
            <person name="Schneiker-Bekel S."/>
            <person name="Schulze K."/>
            <person name="Voerholter F.-J."/>
            <person name="Yevsa T."/>
            <person name="Engle J.T."/>
            <person name="Goldman W.E."/>
            <person name="Puehler A."/>
            <person name="Goebel U.B."/>
            <person name="Goesmann A."/>
            <person name="Bloecker H."/>
            <person name="Kaiser O."/>
            <person name="Martinez-Arias R."/>
        </authorList>
    </citation>
    <scope>NUCLEOTIDE SEQUENCE [LARGE SCALE GENOMIC DNA]</scope>
    <source>
        <strain>ATCC BAA-461 / DSM 12804 / CCUG 43448</strain>
    </source>
</reference>
<protein>
    <recommendedName>
        <fullName evidence="1">Aspartate/glutamate leucyltransferase</fullName>
        <ecNumber evidence="1">2.3.2.29</ecNumber>
    </recommendedName>
</protein>
<evidence type="ECO:0000255" key="1">
    <source>
        <dbReference type="HAMAP-Rule" id="MF_00689"/>
    </source>
</evidence>
<organism>
    <name type="scientific">Bordetella petrii (strain ATCC BAA-461 / DSM 12804 / CCUG 43448)</name>
    <dbReference type="NCBI Taxonomy" id="340100"/>
    <lineage>
        <taxon>Bacteria</taxon>
        <taxon>Pseudomonadati</taxon>
        <taxon>Pseudomonadota</taxon>
        <taxon>Betaproteobacteria</taxon>
        <taxon>Burkholderiales</taxon>
        <taxon>Alcaligenaceae</taxon>
        <taxon>Bordetella</taxon>
    </lineage>
</organism>